<name>1433Z_SHEEP</name>
<dbReference type="PIR" id="S10809">
    <property type="entry name" value="S10809"/>
</dbReference>
<dbReference type="PIR" id="S23304">
    <property type="entry name" value="S23304"/>
</dbReference>
<dbReference type="BMRB" id="P29361"/>
<dbReference type="SMR" id="P29361"/>
<dbReference type="STRING" id="9940.ENSOARP00000020034"/>
<dbReference type="iPTMnet" id="P29361"/>
<dbReference type="PaxDb" id="9940-ENSOARP00000020034"/>
<dbReference type="eggNOG" id="KOG0841">
    <property type="taxonomic scope" value="Eukaryota"/>
</dbReference>
<dbReference type="Proteomes" id="UP000002356">
    <property type="component" value="Unplaced"/>
</dbReference>
<dbReference type="GO" id="GO:0042470">
    <property type="term" value="C:melanosome"/>
    <property type="evidence" value="ECO:0007669"/>
    <property type="project" value="UniProtKB-SubCell"/>
</dbReference>
<dbReference type="GO" id="GO:0050815">
    <property type="term" value="F:phosphoserine residue binding"/>
    <property type="evidence" value="ECO:0000250"/>
    <property type="project" value="UniProtKB"/>
</dbReference>
<dbReference type="GO" id="GO:0140311">
    <property type="term" value="F:protein sequestering activity"/>
    <property type="evidence" value="ECO:0000250"/>
    <property type="project" value="UniProtKB"/>
</dbReference>
<dbReference type="GO" id="GO:0006468">
    <property type="term" value="P:protein phosphorylation"/>
    <property type="evidence" value="ECO:0000250"/>
    <property type="project" value="UniProtKB"/>
</dbReference>
<dbReference type="GO" id="GO:0070372">
    <property type="term" value="P:regulation of ERK1 and ERK2 cascade"/>
    <property type="evidence" value="ECO:0000250"/>
    <property type="project" value="UniProtKB"/>
</dbReference>
<dbReference type="GO" id="GO:0007165">
    <property type="term" value="P:signal transduction"/>
    <property type="evidence" value="ECO:0000250"/>
    <property type="project" value="UniProtKB"/>
</dbReference>
<dbReference type="CDD" id="cd10022">
    <property type="entry name" value="14-3-3_beta_zeta"/>
    <property type="match status" value="1"/>
</dbReference>
<dbReference type="FunFam" id="1.20.190.20:FF:000001">
    <property type="entry name" value="14-3-3 gamma 1"/>
    <property type="match status" value="1"/>
</dbReference>
<dbReference type="Gene3D" id="1.20.190.20">
    <property type="entry name" value="14-3-3 domain"/>
    <property type="match status" value="1"/>
</dbReference>
<dbReference type="InterPro" id="IPR000308">
    <property type="entry name" value="14-3-3"/>
</dbReference>
<dbReference type="InterPro" id="IPR023409">
    <property type="entry name" value="14-3-3_CS"/>
</dbReference>
<dbReference type="InterPro" id="IPR036815">
    <property type="entry name" value="14-3-3_dom_sf"/>
</dbReference>
<dbReference type="InterPro" id="IPR023410">
    <property type="entry name" value="14-3-3_domain"/>
</dbReference>
<dbReference type="PANTHER" id="PTHR18860">
    <property type="entry name" value="14-3-3 PROTEIN"/>
    <property type="match status" value="1"/>
</dbReference>
<dbReference type="Pfam" id="PF00244">
    <property type="entry name" value="14-3-3"/>
    <property type="match status" value="1"/>
</dbReference>
<dbReference type="PIRSF" id="PIRSF000868">
    <property type="entry name" value="14-3-3"/>
    <property type="match status" value="1"/>
</dbReference>
<dbReference type="PRINTS" id="PR00305">
    <property type="entry name" value="1433ZETA"/>
</dbReference>
<dbReference type="SMART" id="SM00101">
    <property type="entry name" value="14_3_3"/>
    <property type="match status" value="1"/>
</dbReference>
<dbReference type="SUPFAM" id="SSF48445">
    <property type="entry name" value="14-3-3 protein"/>
    <property type="match status" value="1"/>
</dbReference>
<dbReference type="PROSITE" id="PS00796">
    <property type="entry name" value="1433_1"/>
    <property type="match status" value="1"/>
</dbReference>
<dbReference type="PROSITE" id="PS00797">
    <property type="entry name" value="1433_2"/>
    <property type="match status" value="1"/>
</dbReference>
<gene>
    <name type="primary">YWHAZ</name>
</gene>
<sequence length="245" mass="27856">MDKNELVQKAKLAEQAERYDDMAACMKSVTEQGAELSNEERNLLSVAYKNVVGARRSSWRVVSSIEQKTEGAEKKQQMAREYREKIETELRDICNDVLSLLEKFLIPNRSQPESKVFYLKMKGDYYRYLAEVAAGDDKKGIVDQSQQAYQEAFEISKKEMQPTHPIRLGLALNFSVFYYEILNSPEKACSLAKTAFDEAIAELDTLSEESYKDSTLIMQLLRDNLTLWTSDTQGDEAEAGEGGEN</sequence>
<evidence type="ECO:0000250" key="1">
    <source>
        <dbReference type="UniProtKB" id="O55043"/>
    </source>
</evidence>
<evidence type="ECO:0000250" key="2">
    <source>
        <dbReference type="UniProtKB" id="P63101"/>
    </source>
</evidence>
<evidence type="ECO:0000250" key="3">
    <source>
        <dbReference type="UniProtKB" id="P63102"/>
    </source>
</evidence>
<evidence type="ECO:0000250" key="4">
    <source>
        <dbReference type="UniProtKB" id="P63103"/>
    </source>
</evidence>
<evidence type="ECO:0000250" key="5">
    <source>
        <dbReference type="UniProtKB" id="P63104"/>
    </source>
</evidence>
<evidence type="ECO:0000250" key="6">
    <source>
        <dbReference type="UniProtKB" id="Q9ES28"/>
    </source>
</evidence>
<evidence type="ECO:0000269" key="7">
    <source>
    </source>
</evidence>
<evidence type="ECO:0000269" key="8">
    <source>
    </source>
</evidence>
<evidence type="ECO:0000305" key="9"/>
<proteinExistence type="evidence at protein level"/>
<feature type="chain" id="PRO_0000058631" description="14-3-3 protein zeta/delta">
    <location>
        <begin position="1"/>
        <end position="245"/>
    </location>
</feature>
<feature type="site" description="Interaction with phosphoserine on interacting protein" evidence="4">
    <location>
        <position position="56"/>
    </location>
</feature>
<feature type="site" description="Interaction with phosphoserine on interacting protein" evidence="4">
    <location>
        <position position="127"/>
    </location>
</feature>
<feature type="modified residue" description="N-acetylmethionine" evidence="7">
    <location>
        <position position="1"/>
    </location>
</feature>
<feature type="modified residue" description="N6-acetyllysine" evidence="5">
    <location>
        <position position="3"/>
    </location>
</feature>
<feature type="modified residue" description="Phosphoserine; by PKA" evidence="5">
    <location>
        <position position="58"/>
    </location>
</feature>
<feature type="modified residue" description="N6-acetyllysine" evidence="5">
    <location>
        <position position="68"/>
    </location>
</feature>
<feature type="modified residue" description="Phosphoserine" evidence="8">
    <location>
        <position position="184"/>
    </location>
</feature>
<feature type="modified residue" description="Phosphoserine" evidence="5">
    <location>
        <position position="207"/>
    </location>
</feature>
<feature type="modified residue" description="Phosphoserine" evidence="3">
    <location>
        <position position="210"/>
    </location>
</feature>
<feature type="modified residue" description="Phosphothreonine; by CK1" evidence="5">
    <location>
        <position position="232"/>
    </location>
</feature>
<accession>P29361</accession>
<reference key="1">
    <citation type="journal article" date="1992" name="Eur. J. Biochem.">
        <title>Multiple isoforms of a protein kinase C inhibitor (KCIP-1/14-3-3) from sheep brain. Amino acid sequence of phosphorylated forms.</title>
        <authorList>
            <person name="Toker A."/>
            <person name="Sellers L.A."/>
            <person name="Amess B."/>
            <person name="Patel Y."/>
            <person name="Harris A."/>
            <person name="Aitken A."/>
        </authorList>
    </citation>
    <scope>PROTEIN SEQUENCE</scope>
    <scope>ACETYLATION AT MET-1</scope>
    <source>
        <tissue>Brain</tissue>
    </source>
</reference>
<reference key="2">
    <citation type="journal article" date="1990" name="Eur. J. Biochem.">
        <title>Protein kinase C inhibitor proteins. Purification from sheep brain and sequence similarity to lipocortins and 14-3-3 protein.</title>
        <authorList>
            <person name="Toker A."/>
            <person name="Ellis C.A."/>
            <person name="Sellers L.A."/>
            <person name="Aitken A."/>
        </authorList>
    </citation>
    <scope>PROTEIN SEQUENCE OF 1-22 AND 122-137</scope>
    <source>
        <tissue>Brain</tissue>
    </source>
</reference>
<reference key="3">
    <citation type="journal article" date="1995" name="J. Biol. Chem.">
        <title>14-3-3 alpha and delta are the phosphorylated forms of raf-activating 14-3-3 beta and zeta. In vivo stoichiometric phosphorylation in brain at a Ser-Pro-Glu-Lys motif.</title>
        <authorList>
            <person name="Aitken A."/>
            <person name="Howell S."/>
            <person name="Jones D."/>
            <person name="Madrazo J."/>
            <person name="Patel Y."/>
        </authorList>
    </citation>
    <scope>PHOSPHORYLATION AT SER-184</scope>
</reference>
<reference key="4">
    <citation type="journal article" date="1994" name="J. Protein Chem.">
        <title>Electrospray mass spectroscopy analysis with online trapping of posttranslationally modified mammalian and avian brain 14-3-3 isoforms.</title>
        <authorList>
            <person name="Aitken A."/>
            <person name="Patel Y."/>
            <person name="Martin H."/>
            <person name="Jones D."/>
            <person name="Robinson K."/>
            <person name="Madrazo J."/>
            <person name="Howell S."/>
        </authorList>
    </citation>
    <scope>IDENTIFICATION BY MASS SPECTROMETRY</scope>
</reference>
<reference key="5">
    <citation type="journal article" date="2001" name="Proc. Natl. Acad. Sci. U.S.A.">
        <title>Role of a pineal cAMP-operated arylalkylamine N-acetyltransferase/14-3-3-binding switch in melatonin synthesis.</title>
        <authorList>
            <person name="Ganguly S."/>
            <person name="Gastel J.A."/>
            <person name="Weller J.L."/>
            <person name="Schwartz C."/>
            <person name="Jaffe H."/>
            <person name="Namboodiri M.A."/>
            <person name="Coon S.L."/>
            <person name="Hickman A.B."/>
            <person name="Rollag M."/>
            <person name="Obsil T."/>
            <person name="Beauverger P."/>
            <person name="Ferry G."/>
            <person name="Boutin J.A."/>
            <person name="Klein D.C."/>
        </authorList>
    </citation>
    <scope>INTERACTION WITH AANAT</scope>
</reference>
<protein>
    <recommendedName>
        <fullName>14-3-3 protein zeta/delta</fullName>
    </recommendedName>
    <alternativeName>
        <fullName>Protein kinase C inhibitor protein 1</fullName>
        <shortName>KCIP-1</shortName>
    </alternativeName>
</protein>
<keyword id="KW-0007">Acetylation</keyword>
<keyword id="KW-0963">Cytoplasm</keyword>
<keyword id="KW-0903">Direct protein sequencing</keyword>
<keyword id="KW-0597">Phosphoprotein</keyword>
<keyword id="KW-1185">Reference proteome</keyword>
<comment type="function">
    <text evidence="1 5">Adapter protein implicated in the regulation of a large spectrum of both general and specialized signaling pathways. Binds to a large number of partners, usually by recognition of a phosphoserine or phosphothreonine motif. Binding generally results in the modulation of the activity of the binding partner. Promotes cytosolic retention and inactivation of TFEB transcription factor by binding to phosphorylated TFEB. Induces ARHGEF7 activity on RAC1 as well as lamellipodia and membrane ruffle formation (By similarity). In neurons, regulates spine maturation through the modulation of ARHGEF7 activity (By similarity).</text>
</comment>
<comment type="subunit">
    <text evidence="2 5 6">Interacts with CDK16 and BSPRY (By similarity). Interacts with WEE1 (C-terminal). Interacts with SAMSN1 (By similarity). Interacts with MLF1 (phosphorylated form); the interaction retains it in the cytoplasm (By similarity). Interacts with Thr-phosphorylated ITGB2 (By similarity). Interacts with BCL2L11 (By similarity). Homodimer. Heterodimerizes with YWHAE. Homo- and heterodimerization is inhibited by phosphorylation on Ser-58. Interacts with FOXO4, NOXA1, SSH1 and ARHGEF2. Interacts with Pseudomonas aeruginosa exoS (unphosphorylated form). Interacts with BAX; the interaction occurs in the cytoplasm. Under stress conditions, MAPK8-mediated phosphorylation releases BAX to mitochondria. Interacts with phosphorylated RAF1; the interaction is inhibited when YWHAZ is phosphorylated on Thr-232. Interacts with TP53; the interaction enhances p53 transcriptional activity. The Ser-58 phosphorylated form inhibits this interaction and p53 transcriptional activity. Interacts with ABL1 (phosphorylated form); the interaction retains ABL1 in the cytoplasm. Interacts with PKA-phosphorylated AANAT; the interaction modulates AANAT enzymatic activity by increasing affinity for arylalkylamines and acetyl-CoA and protecting the enzyme from dephosphorylation and proteasomal degradation. It may also prevent thiol-dependent inactivation. Interacts with AKT1; the interaction phosphorylates YWHAZ and modulates dimerization. Interacts with GAB2 and TLK2. Interacts with the 'Thr-369' phosphorylated form of DAPK2. Interacts with PI4KB, TBC1D22A and TBC1D22B (By similarity). Interacts with ZFP36L1 (via phosphorylated form); this interaction occurs in a p38 MAPK- and AKT-signaling pathways (By similarity). Interacts with SLITRK1 (By similarity). Interacts with AK5, LDB1, MADD, MARK3, PDE1A and SMARCB1 (By similarity). Interacts with YWHAZ (By similarity). Interacts with MEFV (By similarity). Interacts with ADAM22 (via C-terminus) (By similarity).</text>
</comment>
<comment type="subcellular location">
    <subcellularLocation>
        <location evidence="5">Cytoplasm</location>
    </subcellularLocation>
    <subcellularLocation>
        <location evidence="5">Melanosome</location>
    </subcellularLocation>
    <text evidence="5">Located to stage I to stage IV melanosomes.</text>
</comment>
<comment type="tissue specificity">
    <text>Highly expressed in brain (at protein level).</text>
</comment>
<comment type="PTM">
    <text evidence="5">The delta, brain-specific form differs from the zeta form in being phosphorylated. Phosphorylation on Ser-184 by MAPK8; promotes dissociation of BAX and translocation of BAX to mitochondria. Phosphorylation on Thr-232; inhibits binding of RAF1. Phosphorylated on Ser-58 by PKA and protein kinase C delta type catalytic subunit in a sphingosine-dependent fashion. Phosphorylation on Ser-58 by PKA; disrupts homodimerization and heterodimerization with YHAE and TP53.</text>
</comment>
<comment type="similarity">
    <text evidence="9">Belongs to the 14-3-3 family.</text>
</comment>
<organism>
    <name type="scientific">Ovis aries</name>
    <name type="common">Sheep</name>
    <dbReference type="NCBI Taxonomy" id="9940"/>
    <lineage>
        <taxon>Eukaryota</taxon>
        <taxon>Metazoa</taxon>
        <taxon>Chordata</taxon>
        <taxon>Craniata</taxon>
        <taxon>Vertebrata</taxon>
        <taxon>Euteleostomi</taxon>
        <taxon>Mammalia</taxon>
        <taxon>Eutheria</taxon>
        <taxon>Laurasiatheria</taxon>
        <taxon>Artiodactyla</taxon>
        <taxon>Ruminantia</taxon>
        <taxon>Pecora</taxon>
        <taxon>Bovidae</taxon>
        <taxon>Caprinae</taxon>
        <taxon>Ovis</taxon>
    </lineage>
</organism>